<comment type="function">
    <text evidence="1">An accessory protein needed during the final step in the assembly of 30S ribosomal subunit, possibly for assembly of the head region. Essential for efficient processing of 16S rRNA. May be needed both before and after RbfA during the maturation of 16S rRNA. It has affinity for free ribosomal 30S subunits but not for 70S ribosomes.</text>
</comment>
<comment type="subunit">
    <text evidence="1">Binds ribosomal protein uS19.</text>
</comment>
<comment type="subcellular location">
    <subcellularLocation>
        <location evidence="1">Cytoplasm</location>
    </subcellularLocation>
</comment>
<comment type="domain">
    <text evidence="1">The PRC barrel domain binds ribosomal protein uS19.</text>
</comment>
<comment type="similarity">
    <text evidence="1">Belongs to the RimM family.</text>
</comment>
<sequence>MTPTQNVPEDRIQIGQLRSAYGLNGWLWVYSNTEPMSNMFDYLPWFIETKAGWQTVDVKRWKPHGKGLVVSLKNVSDRNAAESLIGSTIWVAKSQLPKTDVDEYYWSDLKGLTVLGLDEEEQEVNLGQIHELFETGANDVMVVRATADSVDAEERMIPWHKDVVQRVDLEAGRIYVNWGVDY</sequence>
<evidence type="ECO:0000255" key="1">
    <source>
        <dbReference type="HAMAP-Rule" id="MF_00014"/>
    </source>
</evidence>
<evidence type="ECO:0007829" key="2">
    <source>
        <dbReference type="PDB" id="2QGG"/>
    </source>
</evidence>
<organism>
    <name type="scientific">Acinetobacter baylyi (strain ATCC 33305 / BD413 / ADP1)</name>
    <dbReference type="NCBI Taxonomy" id="62977"/>
    <lineage>
        <taxon>Bacteria</taxon>
        <taxon>Pseudomonadati</taxon>
        <taxon>Pseudomonadota</taxon>
        <taxon>Gammaproteobacteria</taxon>
        <taxon>Moraxellales</taxon>
        <taxon>Moraxellaceae</taxon>
        <taxon>Acinetobacter</taxon>
    </lineage>
</organism>
<name>RIMM_ACIAD</name>
<gene>
    <name evidence="1" type="primary">rimM</name>
    <name type="ordered locus">ACIAD3312</name>
</gene>
<protein>
    <recommendedName>
        <fullName evidence="1">Ribosome maturation factor RimM</fullName>
    </recommendedName>
</protein>
<accession>Q6F7I0</accession>
<feature type="chain" id="PRO_0000163239" description="Ribosome maturation factor RimM">
    <location>
        <begin position="1"/>
        <end position="182"/>
    </location>
</feature>
<feature type="domain" description="PRC barrel" evidence="1">
    <location>
        <begin position="101"/>
        <end position="182"/>
    </location>
</feature>
<feature type="strand" evidence="2">
    <location>
        <begin position="9"/>
        <end position="21"/>
    </location>
</feature>
<feature type="turn" evidence="2">
    <location>
        <begin position="22"/>
        <end position="25"/>
    </location>
</feature>
<feature type="strand" evidence="2">
    <location>
        <begin position="26"/>
        <end position="31"/>
    </location>
</feature>
<feature type="strand" evidence="2">
    <location>
        <begin position="33"/>
        <end position="35"/>
    </location>
</feature>
<feature type="helix" evidence="2">
    <location>
        <begin position="36"/>
        <end position="41"/>
    </location>
</feature>
<feature type="strand" evidence="2">
    <location>
        <begin position="42"/>
        <end position="49"/>
    </location>
</feature>
<feature type="strand" evidence="2">
    <location>
        <begin position="52"/>
        <end position="56"/>
    </location>
</feature>
<feature type="strand" evidence="2">
    <location>
        <begin position="58"/>
        <end position="64"/>
    </location>
</feature>
<feature type="strand" evidence="2">
    <location>
        <begin position="67"/>
        <end position="72"/>
    </location>
</feature>
<feature type="helix" evidence="2">
    <location>
        <begin position="78"/>
        <end position="82"/>
    </location>
</feature>
<feature type="turn" evidence="2">
    <location>
        <begin position="83"/>
        <end position="86"/>
    </location>
</feature>
<feature type="strand" evidence="2">
    <location>
        <begin position="88"/>
        <end position="92"/>
    </location>
</feature>
<feature type="helix" evidence="2">
    <location>
        <begin position="100"/>
        <end position="103"/>
    </location>
</feature>
<feature type="helix" evidence="2">
    <location>
        <begin position="106"/>
        <end position="109"/>
    </location>
</feature>
<feature type="strand" evidence="2">
    <location>
        <begin position="113"/>
        <end position="117"/>
    </location>
</feature>
<feature type="strand" evidence="2">
    <location>
        <begin position="123"/>
        <end position="134"/>
    </location>
</feature>
<feature type="strand" evidence="2">
    <location>
        <begin position="139"/>
        <end position="144"/>
    </location>
</feature>
<feature type="strand" evidence="2">
    <location>
        <begin position="147"/>
        <end position="152"/>
    </location>
</feature>
<feature type="strand" evidence="2">
    <location>
        <begin position="155"/>
        <end position="158"/>
    </location>
</feature>
<feature type="turn" evidence="2">
    <location>
        <begin position="161"/>
        <end position="163"/>
    </location>
</feature>
<feature type="strand" evidence="2">
    <location>
        <begin position="164"/>
        <end position="168"/>
    </location>
</feature>
<feature type="turn" evidence="2">
    <location>
        <begin position="169"/>
        <end position="172"/>
    </location>
</feature>
<feature type="strand" evidence="2">
    <location>
        <begin position="173"/>
        <end position="177"/>
    </location>
</feature>
<keyword id="KW-0002">3D-structure</keyword>
<keyword id="KW-0143">Chaperone</keyword>
<keyword id="KW-0963">Cytoplasm</keyword>
<keyword id="KW-0690">Ribosome biogenesis</keyword>
<keyword id="KW-0698">rRNA processing</keyword>
<proteinExistence type="evidence at protein level"/>
<dbReference type="EMBL" id="CR543861">
    <property type="protein sequence ID" value="CAG69985.1"/>
    <property type="molecule type" value="Genomic_DNA"/>
</dbReference>
<dbReference type="RefSeq" id="WP_004923846.1">
    <property type="nucleotide sequence ID" value="NC_005966.1"/>
</dbReference>
<dbReference type="PDB" id="2QGG">
    <property type="method" value="X-ray"/>
    <property type="resolution" value="2.40 A"/>
    <property type="chains" value="A=1-182"/>
</dbReference>
<dbReference type="PDBsum" id="2QGG"/>
<dbReference type="SMR" id="Q6F7I0"/>
<dbReference type="STRING" id="202950.GCA_001485005_02156"/>
<dbReference type="GeneID" id="45235513"/>
<dbReference type="KEGG" id="aci:ACIAD3312"/>
<dbReference type="eggNOG" id="COG0806">
    <property type="taxonomic scope" value="Bacteria"/>
</dbReference>
<dbReference type="HOGENOM" id="CLU_077636_1_0_6"/>
<dbReference type="OrthoDB" id="9783509at2"/>
<dbReference type="BioCyc" id="ASP62977:ACIAD_RS14990-MONOMER"/>
<dbReference type="EvolutionaryTrace" id="Q6F7I0"/>
<dbReference type="Proteomes" id="UP000000430">
    <property type="component" value="Chromosome"/>
</dbReference>
<dbReference type="GO" id="GO:0005737">
    <property type="term" value="C:cytoplasm"/>
    <property type="evidence" value="ECO:0007669"/>
    <property type="project" value="UniProtKB-SubCell"/>
</dbReference>
<dbReference type="GO" id="GO:0005840">
    <property type="term" value="C:ribosome"/>
    <property type="evidence" value="ECO:0007669"/>
    <property type="project" value="InterPro"/>
</dbReference>
<dbReference type="GO" id="GO:0043022">
    <property type="term" value="F:ribosome binding"/>
    <property type="evidence" value="ECO:0007669"/>
    <property type="project" value="InterPro"/>
</dbReference>
<dbReference type="GO" id="GO:0042274">
    <property type="term" value="P:ribosomal small subunit biogenesis"/>
    <property type="evidence" value="ECO:0007669"/>
    <property type="project" value="UniProtKB-UniRule"/>
</dbReference>
<dbReference type="GO" id="GO:0006364">
    <property type="term" value="P:rRNA processing"/>
    <property type="evidence" value="ECO:0007669"/>
    <property type="project" value="UniProtKB-UniRule"/>
</dbReference>
<dbReference type="Gene3D" id="2.30.30.240">
    <property type="entry name" value="PRC-barrel domain"/>
    <property type="match status" value="1"/>
</dbReference>
<dbReference type="Gene3D" id="2.40.30.60">
    <property type="entry name" value="RimM"/>
    <property type="match status" value="1"/>
</dbReference>
<dbReference type="HAMAP" id="MF_00014">
    <property type="entry name" value="Ribosome_mat_RimM"/>
    <property type="match status" value="1"/>
</dbReference>
<dbReference type="InterPro" id="IPR011033">
    <property type="entry name" value="PRC_barrel-like_sf"/>
</dbReference>
<dbReference type="InterPro" id="IPR056792">
    <property type="entry name" value="PRC_RimM"/>
</dbReference>
<dbReference type="InterPro" id="IPR011961">
    <property type="entry name" value="RimM"/>
</dbReference>
<dbReference type="InterPro" id="IPR002676">
    <property type="entry name" value="RimM_N"/>
</dbReference>
<dbReference type="InterPro" id="IPR036976">
    <property type="entry name" value="RimM_N_sf"/>
</dbReference>
<dbReference type="InterPro" id="IPR009000">
    <property type="entry name" value="Transl_B-barrel_sf"/>
</dbReference>
<dbReference type="NCBIfam" id="TIGR02273">
    <property type="entry name" value="16S_RimM"/>
    <property type="match status" value="1"/>
</dbReference>
<dbReference type="PANTHER" id="PTHR33692">
    <property type="entry name" value="RIBOSOME MATURATION FACTOR RIMM"/>
    <property type="match status" value="1"/>
</dbReference>
<dbReference type="PANTHER" id="PTHR33692:SF1">
    <property type="entry name" value="RIBOSOME MATURATION FACTOR RIMM"/>
    <property type="match status" value="1"/>
</dbReference>
<dbReference type="Pfam" id="PF24986">
    <property type="entry name" value="PRC_RimM"/>
    <property type="match status" value="1"/>
</dbReference>
<dbReference type="Pfam" id="PF01782">
    <property type="entry name" value="RimM"/>
    <property type="match status" value="1"/>
</dbReference>
<dbReference type="SUPFAM" id="SSF50346">
    <property type="entry name" value="PRC-barrel domain"/>
    <property type="match status" value="1"/>
</dbReference>
<dbReference type="SUPFAM" id="SSF50447">
    <property type="entry name" value="Translation proteins"/>
    <property type="match status" value="1"/>
</dbReference>
<reference key="1">
    <citation type="journal article" date="2004" name="Nucleic Acids Res.">
        <title>Unique features revealed by the genome sequence of Acinetobacter sp. ADP1, a versatile and naturally transformation competent bacterium.</title>
        <authorList>
            <person name="Barbe V."/>
            <person name="Vallenet D."/>
            <person name="Fonknechten N."/>
            <person name="Kreimeyer A."/>
            <person name="Oztas S."/>
            <person name="Labarre L."/>
            <person name="Cruveiller S."/>
            <person name="Robert C."/>
            <person name="Duprat S."/>
            <person name="Wincker P."/>
            <person name="Ornston L.N."/>
            <person name="Weissenbach J."/>
            <person name="Marliere P."/>
            <person name="Cohen G.N."/>
            <person name="Medigue C."/>
        </authorList>
    </citation>
    <scope>NUCLEOTIDE SEQUENCE [LARGE SCALE GENOMIC DNA]</scope>
    <source>
        <strain>ATCC 33305 / BD413 / ADP1</strain>
    </source>
</reference>
<reference key="2">
    <citation type="submission" date="2007-07" db="PDB data bank">
        <title>X-ray structure of the protein Q6F7I0 from Acinetobacter calcoaceticus AmMS 248.</title>
        <authorList>
            <consortium name="Northeast structural genomics consortium (NESG)"/>
        </authorList>
    </citation>
    <scope>X-RAY CRYSTALLOGRAPHY (2.4 ANGSTROMS)</scope>
</reference>